<accession>M9NE38</accession>
<accession>Q8IQ69</accession>
<gene>
    <name evidence="4" type="primary">jv</name>
    <name evidence="4" type="ORF">CG32397</name>
</gene>
<keyword id="KW-0025">Alternative splicing</keyword>
<keyword id="KW-0963">Cytoplasm</keyword>
<keyword id="KW-0206">Cytoskeleton</keyword>
<keyword id="KW-0217">Developmental protein</keyword>
<keyword id="KW-1185">Reference proteome</keyword>
<evidence type="ECO:0000256" key="1">
    <source>
        <dbReference type="SAM" id="MobiDB-lite"/>
    </source>
</evidence>
<evidence type="ECO:0000269" key="2">
    <source>
    </source>
</evidence>
<evidence type="ECO:0000305" key="3"/>
<evidence type="ECO:0000312" key="4">
    <source>
        <dbReference type="FlyBase" id="FBgn0263973"/>
    </source>
</evidence>
<evidence type="ECO:0000312" key="5">
    <source>
        <dbReference type="Proteomes" id="UP000000803"/>
    </source>
</evidence>
<name>JV_DROME</name>
<reference evidence="5" key="1">
    <citation type="journal article" date="2000" name="Science">
        <title>The genome sequence of Drosophila melanogaster.</title>
        <authorList>
            <person name="Adams M.D."/>
            <person name="Celniker S.E."/>
            <person name="Holt R.A."/>
            <person name="Evans C.A."/>
            <person name="Gocayne J.D."/>
            <person name="Amanatides P.G."/>
            <person name="Scherer S.E."/>
            <person name="Li P.W."/>
            <person name="Hoskins R.A."/>
            <person name="Galle R.F."/>
            <person name="George R.A."/>
            <person name="Lewis S.E."/>
            <person name="Richards S."/>
            <person name="Ashburner M."/>
            <person name="Henderson S.N."/>
            <person name="Sutton G.G."/>
            <person name="Wortman J.R."/>
            <person name="Yandell M.D."/>
            <person name="Zhang Q."/>
            <person name="Chen L.X."/>
            <person name="Brandon R.C."/>
            <person name="Rogers Y.-H.C."/>
            <person name="Blazej R.G."/>
            <person name="Champe M."/>
            <person name="Pfeiffer B.D."/>
            <person name="Wan K.H."/>
            <person name="Doyle C."/>
            <person name="Baxter E.G."/>
            <person name="Helt G."/>
            <person name="Nelson C.R."/>
            <person name="Miklos G.L.G."/>
            <person name="Abril J.F."/>
            <person name="Agbayani A."/>
            <person name="An H.-J."/>
            <person name="Andrews-Pfannkoch C."/>
            <person name="Baldwin D."/>
            <person name="Ballew R.M."/>
            <person name="Basu A."/>
            <person name="Baxendale J."/>
            <person name="Bayraktaroglu L."/>
            <person name="Beasley E.M."/>
            <person name="Beeson K.Y."/>
            <person name="Benos P.V."/>
            <person name="Berman B.P."/>
            <person name="Bhandari D."/>
            <person name="Bolshakov S."/>
            <person name="Borkova D."/>
            <person name="Botchan M.R."/>
            <person name="Bouck J."/>
            <person name="Brokstein P."/>
            <person name="Brottier P."/>
            <person name="Burtis K.C."/>
            <person name="Busam D.A."/>
            <person name="Butler H."/>
            <person name="Cadieu E."/>
            <person name="Center A."/>
            <person name="Chandra I."/>
            <person name="Cherry J.M."/>
            <person name="Cawley S."/>
            <person name="Dahlke C."/>
            <person name="Davenport L.B."/>
            <person name="Davies P."/>
            <person name="de Pablos B."/>
            <person name="Delcher A."/>
            <person name="Deng Z."/>
            <person name="Mays A.D."/>
            <person name="Dew I."/>
            <person name="Dietz S.M."/>
            <person name="Dodson K."/>
            <person name="Doup L.E."/>
            <person name="Downes M."/>
            <person name="Dugan-Rocha S."/>
            <person name="Dunkov B.C."/>
            <person name="Dunn P."/>
            <person name="Durbin K.J."/>
            <person name="Evangelista C.C."/>
            <person name="Ferraz C."/>
            <person name="Ferriera S."/>
            <person name="Fleischmann W."/>
            <person name="Fosler C."/>
            <person name="Gabrielian A.E."/>
            <person name="Garg N.S."/>
            <person name="Gelbart W.M."/>
            <person name="Glasser K."/>
            <person name="Glodek A."/>
            <person name="Gong F."/>
            <person name="Gorrell J.H."/>
            <person name="Gu Z."/>
            <person name="Guan P."/>
            <person name="Harris M."/>
            <person name="Harris N.L."/>
            <person name="Harvey D.A."/>
            <person name="Heiman T.J."/>
            <person name="Hernandez J.R."/>
            <person name="Houck J."/>
            <person name="Hostin D."/>
            <person name="Houston K.A."/>
            <person name="Howland T.J."/>
            <person name="Wei M.-H."/>
            <person name="Ibegwam C."/>
            <person name="Jalali M."/>
            <person name="Kalush F."/>
            <person name="Karpen G.H."/>
            <person name="Ke Z."/>
            <person name="Kennison J.A."/>
            <person name="Ketchum K.A."/>
            <person name="Kimmel B.E."/>
            <person name="Kodira C.D."/>
            <person name="Kraft C.L."/>
            <person name="Kravitz S."/>
            <person name="Kulp D."/>
            <person name="Lai Z."/>
            <person name="Lasko P."/>
            <person name="Lei Y."/>
            <person name="Levitsky A.A."/>
            <person name="Li J.H."/>
            <person name="Li Z."/>
            <person name="Liang Y."/>
            <person name="Lin X."/>
            <person name="Liu X."/>
            <person name="Mattei B."/>
            <person name="McIntosh T.C."/>
            <person name="McLeod M.P."/>
            <person name="McPherson D."/>
            <person name="Merkulov G."/>
            <person name="Milshina N.V."/>
            <person name="Mobarry C."/>
            <person name="Morris J."/>
            <person name="Moshrefi A."/>
            <person name="Mount S.M."/>
            <person name="Moy M."/>
            <person name="Murphy B."/>
            <person name="Murphy L."/>
            <person name="Muzny D.M."/>
            <person name="Nelson D.L."/>
            <person name="Nelson D.R."/>
            <person name="Nelson K.A."/>
            <person name="Nixon K."/>
            <person name="Nusskern D.R."/>
            <person name="Pacleb J.M."/>
            <person name="Palazzolo M."/>
            <person name="Pittman G.S."/>
            <person name="Pan S."/>
            <person name="Pollard J."/>
            <person name="Puri V."/>
            <person name="Reese M.G."/>
            <person name="Reinert K."/>
            <person name="Remington K."/>
            <person name="Saunders R.D.C."/>
            <person name="Scheeler F."/>
            <person name="Shen H."/>
            <person name="Shue B.C."/>
            <person name="Siden-Kiamos I."/>
            <person name="Simpson M."/>
            <person name="Skupski M.P."/>
            <person name="Smith T.J."/>
            <person name="Spier E."/>
            <person name="Spradling A.C."/>
            <person name="Stapleton M."/>
            <person name="Strong R."/>
            <person name="Sun E."/>
            <person name="Svirskas R."/>
            <person name="Tector C."/>
            <person name="Turner R."/>
            <person name="Venter E."/>
            <person name="Wang A.H."/>
            <person name="Wang X."/>
            <person name="Wang Z.-Y."/>
            <person name="Wassarman D.A."/>
            <person name="Weinstock G.M."/>
            <person name="Weissenbach J."/>
            <person name="Williams S.M."/>
            <person name="Woodage T."/>
            <person name="Worley K.C."/>
            <person name="Wu D."/>
            <person name="Yang S."/>
            <person name="Yao Q.A."/>
            <person name="Ye J."/>
            <person name="Yeh R.-F."/>
            <person name="Zaveri J.S."/>
            <person name="Zhan M."/>
            <person name="Zhang G."/>
            <person name="Zhao Q."/>
            <person name="Zheng L."/>
            <person name="Zheng X.H."/>
            <person name="Zhong F.N."/>
            <person name="Zhong W."/>
            <person name="Zhou X."/>
            <person name="Zhu S.C."/>
            <person name="Zhu X."/>
            <person name="Smith H.O."/>
            <person name="Gibbs R.A."/>
            <person name="Myers E.W."/>
            <person name="Rubin G.M."/>
            <person name="Venter J.C."/>
        </authorList>
    </citation>
    <scope>NUCLEOTIDE SEQUENCE [LARGE SCALE GENOMIC DNA]</scope>
    <source>
        <strain evidence="5">Berkeley</strain>
    </source>
</reference>
<reference evidence="5" key="2">
    <citation type="journal article" date="2002" name="Genome Biol.">
        <title>Annotation of the Drosophila melanogaster euchromatic genome: a systematic review.</title>
        <authorList>
            <person name="Misra S."/>
            <person name="Crosby M.A."/>
            <person name="Mungall C.J."/>
            <person name="Matthews B.B."/>
            <person name="Campbell K.S."/>
            <person name="Hradecky P."/>
            <person name="Huang Y."/>
            <person name="Kaminker J.S."/>
            <person name="Millburn G.H."/>
            <person name="Prochnik S.E."/>
            <person name="Smith C.D."/>
            <person name="Tupy J.L."/>
            <person name="Whitfield E.J."/>
            <person name="Bayraktaroglu L."/>
            <person name="Berman B.P."/>
            <person name="Bettencourt B.R."/>
            <person name="Celniker S.E."/>
            <person name="de Grey A.D.N.J."/>
            <person name="Drysdale R.A."/>
            <person name="Harris N.L."/>
            <person name="Richter J."/>
            <person name="Russo S."/>
            <person name="Schroeder A.J."/>
            <person name="Shu S.Q."/>
            <person name="Stapleton M."/>
            <person name="Yamada C."/>
            <person name="Ashburner M."/>
            <person name="Gelbart W.M."/>
            <person name="Rubin G.M."/>
            <person name="Lewis S.E."/>
        </authorList>
    </citation>
    <scope>GENOME REANNOTATION</scope>
    <source>
        <strain evidence="5">Berkeley</strain>
    </source>
</reference>
<reference evidence="3" key="3">
    <citation type="journal article" date="2011" name="Mol. Cell. Biol.">
        <title>The Drosophila javelin gene encodes a novel actin-associated protein required for actin assembly in the bristle.</title>
        <authorList>
            <person name="Shapira S."/>
            <person name="Bakhrat A."/>
            <person name="Bitan A."/>
            <person name="Abdu U."/>
        </authorList>
    </citation>
    <scope>FUNCTION</scope>
    <scope>SUBCELLULAR LOCATION</scope>
    <scope>DISRUPTION PHENOTYPE</scope>
</reference>
<organism evidence="5">
    <name type="scientific">Drosophila melanogaster</name>
    <name type="common">Fruit fly</name>
    <dbReference type="NCBI Taxonomy" id="7227"/>
    <lineage>
        <taxon>Eukaryota</taxon>
        <taxon>Metazoa</taxon>
        <taxon>Ecdysozoa</taxon>
        <taxon>Arthropoda</taxon>
        <taxon>Hexapoda</taxon>
        <taxon>Insecta</taxon>
        <taxon>Pterygota</taxon>
        <taxon>Neoptera</taxon>
        <taxon>Endopterygota</taxon>
        <taxon>Diptera</taxon>
        <taxon>Brachycera</taxon>
        <taxon>Muscomorpha</taxon>
        <taxon>Ephydroidea</taxon>
        <taxon>Drosophilidae</taxon>
        <taxon>Drosophila</taxon>
        <taxon>Sophophora</taxon>
    </lineage>
</organism>
<comment type="function">
    <text evidence="2">Important for normal assembly of actin bundles during bristle formation.</text>
</comment>
<comment type="subcellular location">
    <subcellularLocation>
        <location evidence="2">Cytoplasm</location>
        <location evidence="2">Cytoskeleton</location>
    </subcellularLocation>
    <text evidence="2">Colocalizes with actin filaments.</text>
</comment>
<comment type="alternative products">
    <event type="alternative splicing"/>
    <isoform>
        <id>M9NE38-1</id>
        <name evidence="4">D</name>
        <sequence type="displayed"/>
    </isoform>
    <isoform>
        <id>M9NE38-2</id>
        <name evidence="4">B</name>
        <name evidence="4">C</name>
        <sequence type="described" ref="VSP_058781"/>
    </isoform>
</comment>
<comment type="disruption phenotype">
    <text evidence="2">RNAi-mediated knockdown results in abnormal bristle morphology. The bristle ridges are shallower than wild-type and become nonparallel and disorganized near the tip. The tip of the bristle is swollen giving it a javelin-like appearance. In 13% of animals the posterior scutellar bristles are fused.</text>
</comment>
<protein>
    <recommendedName>
        <fullName evidence="4">Protein javelin</fullName>
    </recommendedName>
</protein>
<feature type="chain" id="PRO_0000439053" description="Protein javelin">
    <location>
        <begin position="1"/>
        <end position="1912"/>
    </location>
</feature>
<feature type="region of interest" description="Disordered" evidence="1">
    <location>
        <begin position="1"/>
        <end position="32"/>
    </location>
</feature>
<feature type="region of interest" description="Disordered" evidence="1">
    <location>
        <begin position="89"/>
        <end position="145"/>
    </location>
</feature>
<feature type="region of interest" description="Disordered" evidence="1">
    <location>
        <begin position="298"/>
        <end position="377"/>
    </location>
</feature>
<feature type="region of interest" description="Disordered" evidence="1">
    <location>
        <begin position="460"/>
        <end position="515"/>
    </location>
</feature>
<feature type="region of interest" description="Disordered" evidence="1">
    <location>
        <begin position="545"/>
        <end position="586"/>
    </location>
</feature>
<feature type="region of interest" description="Disordered" evidence="1">
    <location>
        <begin position="764"/>
        <end position="920"/>
    </location>
</feature>
<feature type="region of interest" description="Disordered" evidence="1">
    <location>
        <begin position="965"/>
        <end position="1010"/>
    </location>
</feature>
<feature type="region of interest" description="Disordered" evidence="1">
    <location>
        <begin position="1257"/>
        <end position="1297"/>
    </location>
</feature>
<feature type="region of interest" description="Disordered" evidence="1">
    <location>
        <begin position="1486"/>
        <end position="1507"/>
    </location>
</feature>
<feature type="region of interest" description="Disordered" evidence="1">
    <location>
        <begin position="1881"/>
        <end position="1912"/>
    </location>
</feature>
<feature type="compositionally biased region" description="Basic residues" evidence="1">
    <location>
        <begin position="97"/>
        <end position="133"/>
    </location>
</feature>
<feature type="compositionally biased region" description="Basic residues" evidence="1">
    <location>
        <begin position="299"/>
        <end position="313"/>
    </location>
</feature>
<feature type="compositionally biased region" description="Polar residues" evidence="1">
    <location>
        <begin position="339"/>
        <end position="354"/>
    </location>
</feature>
<feature type="compositionally biased region" description="Low complexity" evidence="1">
    <location>
        <begin position="355"/>
        <end position="374"/>
    </location>
</feature>
<feature type="compositionally biased region" description="Polar residues" evidence="1">
    <location>
        <begin position="489"/>
        <end position="498"/>
    </location>
</feature>
<feature type="compositionally biased region" description="Low complexity" evidence="1">
    <location>
        <begin position="499"/>
        <end position="512"/>
    </location>
</feature>
<feature type="compositionally biased region" description="Acidic residues" evidence="1">
    <location>
        <begin position="553"/>
        <end position="566"/>
    </location>
</feature>
<feature type="compositionally biased region" description="Polar residues" evidence="1">
    <location>
        <begin position="568"/>
        <end position="586"/>
    </location>
</feature>
<feature type="compositionally biased region" description="Basic and acidic residues" evidence="1">
    <location>
        <begin position="772"/>
        <end position="792"/>
    </location>
</feature>
<feature type="compositionally biased region" description="Basic and acidic residues" evidence="1">
    <location>
        <begin position="802"/>
        <end position="869"/>
    </location>
</feature>
<feature type="compositionally biased region" description="Acidic residues" evidence="1">
    <location>
        <begin position="890"/>
        <end position="904"/>
    </location>
</feature>
<feature type="compositionally biased region" description="Basic and acidic residues" evidence="1">
    <location>
        <begin position="965"/>
        <end position="979"/>
    </location>
</feature>
<feature type="compositionally biased region" description="Low complexity" evidence="1">
    <location>
        <begin position="981"/>
        <end position="990"/>
    </location>
</feature>
<feature type="compositionally biased region" description="Acidic residues" evidence="1">
    <location>
        <begin position="1494"/>
        <end position="1507"/>
    </location>
</feature>
<feature type="compositionally biased region" description="Acidic residues" evidence="1">
    <location>
        <begin position="1903"/>
        <end position="1912"/>
    </location>
</feature>
<feature type="splice variant" id="VSP_058781" description="In isoform B.">
    <location>
        <begin position="299"/>
        <end position="318"/>
    </location>
</feature>
<dbReference type="EMBL" id="AE014296">
    <property type="protein sequence ID" value="AAN12084.3"/>
    <property type="molecule type" value="Genomic_DNA"/>
</dbReference>
<dbReference type="EMBL" id="AE014296">
    <property type="protein sequence ID" value="AFH04319.1"/>
    <property type="molecule type" value="Genomic_DNA"/>
</dbReference>
<dbReference type="EMBL" id="AE014296">
    <property type="protein sequence ID" value="AFH04320.1"/>
    <property type="molecule type" value="Genomic_DNA"/>
</dbReference>
<dbReference type="RefSeq" id="NP_001246648.1">
    <molecule id="M9NE38-2"/>
    <property type="nucleotide sequence ID" value="NM_001259719.2"/>
</dbReference>
<dbReference type="RefSeq" id="NP_001246649.1">
    <molecule id="M9NE38-1"/>
    <property type="nucleotide sequence ID" value="NM_001259720.2"/>
</dbReference>
<dbReference type="RefSeq" id="NP_729175.3">
    <molecule id="M9NE38-2"/>
    <property type="nucleotide sequence ID" value="NM_168171.4"/>
</dbReference>
<dbReference type="FunCoup" id="M9NE38">
    <property type="interactions" value="4"/>
</dbReference>
<dbReference type="IntAct" id="M9NE38">
    <property type="interactions" value="7"/>
</dbReference>
<dbReference type="GlyGen" id="M9NE38">
    <property type="glycosylation" value="1 site"/>
</dbReference>
<dbReference type="PaxDb" id="7227-FBpp0300169"/>
<dbReference type="EnsemblMetazoa" id="FBtr0307512">
    <molecule id="M9NE38-2"/>
    <property type="protein sequence ID" value="FBpp0300167"/>
    <property type="gene ID" value="FBgn0263973"/>
</dbReference>
<dbReference type="EnsemblMetazoa" id="FBtr0307513">
    <molecule id="M9NE38-2"/>
    <property type="protein sequence ID" value="FBpp0300168"/>
    <property type="gene ID" value="FBgn0263973"/>
</dbReference>
<dbReference type="EnsemblMetazoa" id="FBtr0307514">
    <molecule id="M9NE38-1"/>
    <property type="protein sequence ID" value="FBpp0300169"/>
    <property type="gene ID" value="FBgn0263973"/>
</dbReference>
<dbReference type="GeneID" id="318008"/>
<dbReference type="KEGG" id="dme:Dmel_CG32397"/>
<dbReference type="UCSC" id="CG32397-RA">
    <property type="organism name" value="d. melanogaster"/>
</dbReference>
<dbReference type="AGR" id="FB:FBgn0263973"/>
<dbReference type="CTD" id="318008"/>
<dbReference type="FlyBase" id="FBgn0263973">
    <property type="gene designation" value="jv"/>
</dbReference>
<dbReference type="VEuPathDB" id="VectorBase:FBgn0263973"/>
<dbReference type="eggNOG" id="ENOG502RZBB">
    <property type="taxonomic scope" value="Eukaryota"/>
</dbReference>
<dbReference type="HOGENOM" id="CLU_236569_0_0_1"/>
<dbReference type="InParanoid" id="M9NE38"/>
<dbReference type="OMA" id="GSGWRQK"/>
<dbReference type="OrthoDB" id="6375147at2759"/>
<dbReference type="PhylomeDB" id="M9NE38"/>
<dbReference type="SignaLink" id="M9NE38"/>
<dbReference type="BioGRID-ORCS" id="318008">
    <property type="hits" value="0 hits in 1 CRISPR screen"/>
</dbReference>
<dbReference type="GenomeRNAi" id="318008"/>
<dbReference type="PRO" id="PR:M9NE38"/>
<dbReference type="Proteomes" id="UP000000803">
    <property type="component" value="Chromosome 3L"/>
</dbReference>
<dbReference type="Bgee" id="FBgn0263973">
    <property type="expression patterns" value="Expressed in spermatid in male reproductive gland and 80 other cell types or tissues"/>
</dbReference>
<dbReference type="ExpressionAtlas" id="M9NE38">
    <property type="expression patterns" value="baseline and differential"/>
</dbReference>
<dbReference type="GO" id="GO:0005737">
    <property type="term" value="C:cytoplasm"/>
    <property type="evidence" value="ECO:0007669"/>
    <property type="project" value="UniProtKB-KW"/>
</dbReference>
<dbReference type="GO" id="GO:0005856">
    <property type="term" value="C:cytoskeleton"/>
    <property type="evidence" value="ECO:0007669"/>
    <property type="project" value="UniProtKB-SubCell"/>
</dbReference>
<dbReference type="GO" id="GO:0008407">
    <property type="term" value="P:chaeta morphogenesis"/>
    <property type="evidence" value="ECO:0000315"/>
    <property type="project" value="FlyBase"/>
</dbReference>
<dbReference type="GO" id="GO:0030046">
    <property type="term" value="P:parallel actin filament bundle assembly"/>
    <property type="evidence" value="ECO:0000315"/>
    <property type="project" value="FlyBase"/>
</dbReference>
<proteinExistence type="predicted"/>
<sequence length="1912" mass="215031">MGNGYFRTSQTSSSSRQREKRGKDSYSYQHNYVDRVRLEDTTGGHYHNNQHQQTTHDPRCPQLRAAGWRHTHKSVSHLDLATSCHDAAGTGLGRHSQQLHHHHSNQVNQHHHQQQQSHHHLQHANLHSHHPHAQPHWTQCRVGGAGSGNGQLRNARSLDYTQLEREENALDIAEFYWRFDAEAPLDQVDSYAVLPINDNFEPSAATSTAVGSKETTTTVANKANGSATTNATTAAANALLDILGSESCSLRRSRSLAVIREETFSDLQIGSANSSRRRSQLIPRARLVNRGFFRESPRSRHKFQFKQFKKKPPAKLLRLNGKPNQATLVGEQPADQPTADDTQSQRSNSATCDSHQQQQQQQHQPQQQHQQQQHRLSGESRDFDVYYDNLKRLDALALNLSEQLHPWHNDKSDLESLNSDYFKNSLHQNHLDQQQPSSLEFEALEQVAASLLKERPRIYQSRRQQQKRNNHHSNCLQRHLDTGGESCPEHSQSSVFPETTTSNSDDQTDSPSLSEQEYDLTHIEEIYQQGNNGEESYEIISLTTTTRTRFESSEEGEEEQTGEEVVDSLTTPTEPQTSDSESTLRQNHNEQLDKLIAYDSVYLSSEDSSDCTLVGESCESFEQRTFTSCGESGELETRSLLHISIEDTVYEPQAKQHKKATNQEDQPAPLLTTTAKVEAQIFTQVLKVEHTPKPNILAVVEKRKLKQEEVKHQPPELKRQATDSFVVTANKSNLAENQYHSLPDVNIGVSLKVCESIDKELRSSYNQQRQQQRKEAKKEQQVTRAETYDSIRRFGRAHQKARQREYQEREREREKEASAALQEKDKEREREKPKINKEFSAQERQIEVKETTKSQDIIKEKEQVSRKEEAEDDEEEEPLPPPPPPLTEESQQEDTVADVEEEDNLSVSISQPEQPKEAPVIEVANFSKLIERRAQEIRERQEQIKPSFQIIVTDAQNNIIQKEAIQENKETSQRIEPKPSPKTNSNSSSTCNLVQRPLRRSVSSSSGKPLEHRILSTGAPIYKARPVRVLPSSSSDSSFSRGKMSRPQILHVVDGRGGVAGGGAGGTLRRRSSARSIASTISSPGGEVANEYLQKVDAVRCYWNKLAGNEPETLKTEQPAKETQPGIHFQLGGETTTQGTDKSAVGNDFCSMMPHPSIEIVELGEGAQKATIVKAAPEREEDPDEDQDQFDHIRYKVLKSQQLIRNNFLSTRNKKEAQFDGLIQYLQEYSFQELLSNNNVVIVEPVRTKIERPLQVGINSGSTTTPTTVPPPKPPRVVNASASQPRKTRQKQTGGAAAKRHFFYQPVRVNRELYEDELPDPDTVRNVRRFFEQNVLPTPGQGLLVQSQQKFGGSACQLSPKSRRARGYRYLTIDTSYGGAEEQPKGMEMLEEHKAKHWDNASLSSGISSGVLSSPCGEYHHQESPVMACKDVHVQDVVRRHNSNAANAKARAKFASRRTWCMGAGGPGANESLYRQIYENNLGNSEQQENGEHLEEEDDEQDDQYEDDVEQDMCENYYVSNDVLAKIRECGSTVTYYGGRVLDKTATSTAAPSTKTTQPMTGSATRSRIRQIEACNVCLPSERCEHRLQTKQAAAKQQQDSYQGIKFKLVKSNSCSSRLELAGTGEDEVTADSEVVRKMVHHFEANQTTASNDVQVTINSQSQITSTKKEPEEDVPRRQVTVNNHINVLGDTMPQASQEKAENFNGRPEENGYGAVETVPTYESQAMNIRLDATENKNILQTAAATAAANKVCRNKNVDLAYTLVKTTTNSPKGKPIEAPRQKIGKQLREVEENVEKAAVTKATIKLTKGAPSQIIVPVDIHSQASIVAHTAPIPERRLSNASSSNSVVDKTVVRHYVANDKSIYERRKYDEIEFEEFEVYDPSKEPPPQVEEGTDKIPTDAELYDSLDDKM</sequence>